<name>RECR_YERPS</name>
<proteinExistence type="inferred from homology"/>
<sequence length="201" mass="21654">MQTSPLLESLMEALRCLPGVGPKSAQRMAFQLLQRDRSGGMRLAQALTRAMSEIGHCADCRTFTEQEHCTICLNPRRQQNGQICVVESPADIHAIEQTGQFGGRYFVLMGHLSPMDGIGPGDIGLDLLEKRLSTEAISEVILATNPTVEGDATANYIGQMCGQYGILASRIAHGVPVGGELEMVDGTTLSHSLAGRNPIKY</sequence>
<comment type="function">
    <text evidence="1">May play a role in DNA repair. It seems to be involved in an RecBC-independent recombinational process of DNA repair. It may act with RecF and RecO.</text>
</comment>
<comment type="similarity">
    <text evidence="1">Belongs to the RecR family.</text>
</comment>
<keyword id="KW-0227">DNA damage</keyword>
<keyword id="KW-0233">DNA recombination</keyword>
<keyword id="KW-0234">DNA repair</keyword>
<keyword id="KW-0479">Metal-binding</keyword>
<keyword id="KW-0862">Zinc</keyword>
<keyword id="KW-0863">Zinc-finger</keyword>
<dbReference type="EMBL" id="BX936398">
    <property type="protein sequence ID" value="CAH20234.1"/>
    <property type="molecule type" value="Genomic_DNA"/>
</dbReference>
<dbReference type="RefSeq" id="WP_002208603.1">
    <property type="nucleotide sequence ID" value="NZ_CP009712.1"/>
</dbReference>
<dbReference type="SMR" id="Q66DP9"/>
<dbReference type="GeneID" id="57975591"/>
<dbReference type="KEGG" id="yps:YPTB0994"/>
<dbReference type="Proteomes" id="UP000001011">
    <property type="component" value="Chromosome"/>
</dbReference>
<dbReference type="GO" id="GO:0003677">
    <property type="term" value="F:DNA binding"/>
    <property type="evidence" value="ECO:0007669"/>
    <property type="project" value="UniProtKB-UniRule"/>
</dbReference>
<dbReference type="GO" id="GO:0008270">
    <property type="term" value="F:zinc ion binding"/>
    <property type="evidence" value="ECO:0007669"/>
    <property type="project" value="UniProtKB-KW"/>
</dbReference>
<dbReference type="GO" id="GO:0006310">
    <property type="term" value="P:DNA recombination"/>
    <property type="evidence" value="ECO:0007669"/>
    <property type="project" value="UniProtKB-UniRule"/>
</dbReference>
<dbReference type="GO" id="GO:0006281">
    <property type="term" value="P:DNA repair"/>
    <property type="evidence" value="ECO:0007669"/>
    <property type="project" value="UniProtKB-UniRule"/>
</dbReference>
<dbReference type="CDD" id="cd01025">
    <property type="entry name" value="TOPRIM_recR"/>
    <property type="match status" value="1"/>
</dbReference>
<dbReference type="FunFam" id="1.10.8.420:FF:000001">
    <property type="entry name" value="Recombination protein RecR"/>
    <property type="match status" value="1"/>
</dbReference>
<dbReference type="FunFam" id="3.40.1360.10:FF:000001">
    <property type="entry name" value="Recombination protein RecR"/>
    <property type="match status" value="1"/>
</dbReference>
<dbReference type="Gene3D" id="3.40.1360.10">
    <property type="match status" value="1"/>
</dbReference>
<dbReference type="Gene3D" id="6.10.250.240">
    <property type="match status" value="1"/>
</dbReference>
<dbReference type="Gene3D" id="1.10.8.420">
    <property type="entry name" value="RecR Domain 1"/>
    <property type="match status" value="1"/>
</dbReference>
<dbReference type="HAMAP" id="MF_00017">
    <property type="entry name" value="RecR"/>
    <property type="match status" value="1"/>
</dbReference>
<dbReference type="InterPro" id="IPR000093">
    <property type="entry name" value="DNA_Rcmb_RecR"/>
</dbReference>
<dbReference type="InterPro" id="IPR023627">
    <property type="entry name" value="Rcmb_RecR"/>
</dbReference>
<dbReference type="InterPro" id="IPR015967">
    <property type="entry name" value="Rcmb_RecR_Znf"/>
</dbReference>
<dbReference type="InterPro" id="IPR006171">
    <property type="entry name" value="TOPRIM_dom"/>
</dbReference>
<dbReference type="InterPro" id="IPR034137">
    <property type="entry name" value="TOPRIM_RecR"/>
</dbReference>
<dbReference type="NCBIfam" id="TIGR00615">
    <property type="entry name" value="recR"/>
    <property type="match status" value="1"/>
</dbReference>
<dbReference type="PANTHER" id="PTHR30446">
    <property type="entry name" value="RECOMBINATION PROTEIN RECR"/>
    <property type="match status" value="1"/>
</dbReference>
<dbReference type="PANTHER" id="PTHR30446:SF0">
    <property type="entry name" value="RECOMBINATION PROTEIN RECR"/>
    <property type="match status" value="1"/>
</dbReference>
<dbReference type="Pfam" id="PF21175">
    <property type="entry name" value="RecR_C"/>
    <property type="match status" value="1"/>
</dbReference>
<dbReference type="Pfam" id="PF21176">
    <property type="entry name" value="RecR_HhH"/>
    <property type="match status" value="1"/>
</dbReference>
<dbReference type="Pfam" id="PF02132">
    <property type="entry name" value="RecR_ZnF"/>
    <property type="match status" value="1"/>
</dbReference>
<dbReference type="Pfam" id="PF13662">
    <property type="entry name" value="Toprim_4"/>
    <property type="match status" value="1"/>
</dbReference>
<dbReference type="SMART" id="SM00493">
    <property type="entry name" value="TOPRIM"/>
    <property type="match status" value="1"/>
</dbReference>
<dbReference type="SUPFAM" id="SSF111304">
    <property type="entry name" value="Recombination protein RecR"/>
    <property type="match status" value="1"/>
</dbReference>
<dbReference type="PROSITE" id="PS01300">
    <property type="entry name" value="RECR"/>
    <property type="match status" value="1"/>
</dbReference>
<dbReference type="PROSITE" id="PS50880">
    <property type="entry name" value="TOPRIM"/>
    <property type="match status" value="1"/>
</dbReference>
<reference key="1">
    <citation type="journal article" date="2004" name="Proc. Natl. Acad. Sci. U.S.A.">
        <title>Insights into the evolution of Yersinia pestis through whole-genome comparison with Yersinia pseudotuberculosis.</title>
        <authorList>
            <person name="Chain P.S.G."/>
            <person name="Carniel E."/>
            <person name="Larimer F.W."/>
            <person name="Lamerdin J."/>
            <person name="Stoutland P.O."/>
            <person name="Regala W.M."/>
            <person name="Georgescu A.M."/>
            <person name="Vergez L.M."/>
            <person name="Land M.L."/>
            <person name="Motin V.L."/>
            <person name="Brubaker R.R."/>
            <person name="Fowler J."/>
            <person name="Hinnebusch J."/>
            <person name="Marceau M."/>
            <person name="Medigue C."/>
            <person name="Simonet M."/>
            <person name="Chenal-Francisque V."/>
            <person name="Souza B."/>
            <person name="Dacheux D."/>
            <person name="Elliott J.M."/>
            <person name="Derbise A."/>
            <person name="Hauser L.J."/>
            <person name="Garcia E."/>
        </authorList>
    </citation>
    <scope>NUCLEOTIDE SEQUENCE [LARGE SCALE GENOMIC DNA]</scope>
    <source>
        <strain>IP32953</strain>
    </source>
</reference>
<feature type="chain" id="PRO_0000190433" description="Recombination protein RecR">
    <location>
        <begin position="1"/>
        <end position="201"/>
    </location>
</feature>
<feature type="domain" description="Toprim" evidence="1">
    <location>
        <begin position="81"/>
        <end position="176"/>
    </location>
</feature>
<feature type="zinc finger region" description="C4-type" evidence="1">
    <location>
        <begin position="57"/>
        <end position="72"/>
    </location>
</feature>
<gene>
    <name evidence="1" type="primary">recR</name>
    <name type="ordered locus">YPTB0994</name>
</gene>
<organism>
    <name type="scientific">Yersinia pseudotuberculosis serotype I (strain IP32953)</name>
    <dbReference type="NCBI Taxonomy" id="273123"/>
    <lineage>
        <taxon>Bacteria</taxon>
        <taxon>Pseudomonadati</taxon>
        <taxon>Pseudomonadota</taxon>
        <taxon>Gammaproteobacteria</taxon>
        <taxon>Enterobacterales</taxon>
        <taxon>Yersiniaceae</taxon>
        <taxon>Yersinia</taxon>
    </lineage>
</organism>
<protein>
    <recommendedName>
        <fullName evidence="1">Recombination protein RecR</fullName>
    </recommendedName>
</protein>
<accession>Q66DP9</accession>
<evidence type="ECO:0000255" key="1">
    <source>
        <dbReference type="HAMAP-Rule" id="MF_00017"/>
    </source>
</evidence>